<sequence>MTQQTFLVEIGTEELPPKALRSLAESFAANFTAELDNANLSHGEVSWYAAPRRLAVKVANLSAAQADREVEKRGPAIAQAFDAEGKPSKAAEGWARGCGITVDQAERLVTDKGEWLLYRAHVKGQPAQLLLAGMVNTALSKLPIPKLMRWGDKETQFVRPVHTVTLLLGTEVIPGTVLGINSDRVIRGHRFMGEAEFTIDSADQYPQILLERGKVIADYELRKSIIKRDAEQAAQQIGGVADLSESLLEEVASLVEWPVVLTAKFEEKFLAVPAEALVYTMKGDQKYFPVYDTAGHLMPHFIFVANIESKDPQQIISGNEKVVRPRLADAEFFFKTDRKKRLEDNLPRLETVLFQQQLGTLRDKTDRIQALAGWVAAQIGADVNHATRAGLLSKCDLMTNMVFEFTDTQGVMGMHYARHDGEAEDVAVALNEQYQPRFAGDDLPSNPVACALAIADKMDTLAGIFGIGQHPKGDKDPFALRRAALGVLRIIVEKNLSLDLQTLTEEAVRLYGSKLTNAKVVDDVIEFMLGRFRAWYQDEGHSVDTIQAVLARRPTKPADFDARVKAVTYFRTLDAAAALAAANKRVSNILAKSTDTLNDHVHASILKEPAELKLATHLVVLRDQLEPVFAAGQYKEALVELAALRETVDEFFESVMVMAEDDAVRVNRLTLLSKLRELFLQVADISLLQ</sequence>
<comment type="catalytic activity">
    <reaction evidence="1">
        <text>tRNA(Gly) + glycine + ATP = glycyl-tRNA(Gly) + AMP + diphosphate</text>
        <dbReference type="Rhea" id="RHEA:16013"/>
        <dbReference type="Rhea" id="RHEA-COMP:9664"/>
        <dbReference type="Rhea" id="RHEA-COMP:9683"/>
        <dbReference type="ChEBI" id="CHEBI:30616"/>
        <dbReference type="ChEBI" id="CHEBI:33019"/>
        <dbReference type="ChEBI" id="CHEBI:57305"/>
        <dbReference type="ChEBI" id="CHEBI:78442"/>
        <dbReference type="ChEBI" id="CHEBI:78522"/>
        <dbReference type="ChEBI" id="CHEBI:456215"/>
        <dbReference type="EC" id="6.1.1.14"/>
    </reaction>
</comment>
<comment type="subunit">
    <text evidence="1">Tetramer of two alpha and two beta subunits.</text>
</comment>
<comment type="subcellular location">
    <subcellularLocation>
        <location evidence="1">Cytoplasm</location>
    </subcellularLocation>
</comment>
<comment type="similarity">
    <text evidence="1">Belongs to the class-II aminoacyl-tRNA synthetase family.</text>
</comment>
<name>SYGB_YERPY</name>
<reference key="1">
    <citation type="submission" date="2008-02" db="EMBL/GenBank/DDBJ databases">
        <title>Complete sequence of Yersinia pseudotuberculosis YPIII.</title>
        <authorList>
            <consortium name="US DOE Joint Genome Institute"/>
            <person name="Copeland A."/>
            <person name="Lucas S."/>
            <person name="Lapidus A."/>
            <person name="Glavina del Rio T."/>
            <person name="Dalin E."/>
            <person name="Tice H."/>
            <person name="Bruce D."/>
            <person name="Goodwin L."/>
            <person name="Pitluck S."/>
            <person name="Munk A.C."/>
            <person name="Brettin T."/>
            <person name="Detter J.C."/>
            <person name="Han C."/>
            <person name="Tapia R."/>
            <person name="Schmutz J."/>
            <person name="Larimer F."/>
            <person name="Land M."/>
            <person name="Hauser L."/>
            <person name="Challacombe J.F."/>
            <person name="Green L."/>
            <person name="Lindler L.E."/>
            <person name="Nikolich M.P."/>
            <person name="Richardson P."/>
        </authorList>
    </citation>
    <scope>NUCLEOTIDE SEQUENCE [LARGE SCALE GENOMIC DNA]</scope>
    <source>
        <strain>YPIII</strain>
    </source>
</reference>
<evidence type="ECO:0000255" key="1">
    <source>
        <dbReference type="HAMAP-Rule" id="MF_00255"/>
    </source>
</evidence>
<gene>
    <name evidence="1" type="primary">glyS</name>
    <name type="ordered locus">YPK_0023</name>
</gene>
<protein>
    <recommendedName>
        <fullName evidence="1">Glycine--tRNA ligase beta subunit</fullName>
        <ecNumber evidence="1">6.1.1.14</ecNumber>
    </recommendedName>
    <alternativeName>
        <fullName evidence="1">Glycyl-tRNA synthetase beta subunit</fullName>
        <shortName evidence="1">GlyRS</shortName>
    </alternativeName>
</protein>
<proteinExistence type="inferred from homology"/>
<keyword id="KW-0030">Aminoacyl-tRNA synthetase</keyword>
<keyword id="KW-0067">ATP-binding</keyword>
<keyword id="KW-0963">Cytoplasm</keyword>
<keyword id="KW-0436">Ligase</keyword>
<keyword id="KW-0547">Nucleotide-binding</keyword>
<keyword id="KW-0648">Protein biosynthesis</keyword>
<organism>
    <name type="scientific">Yersinia pseudotuberculosis serotype O:3 (strain YPIII)</name>
    <dbReference type="NCBI Taxonomy" id="502800"/>
    <lineage>
        <taxon>Bacteria</taxon>
        <taxon>Pseudomonadati</taxon>
        <taxon>Pseudomonadota</taxon>
        <taxon>Gammaproteobacteria</taxon>
        <taxon>Enterobacterales</taxon>
        <taxon>Yersiniaceae</taxon>
        <taxon>Yersinia</taxon>
    </lineage>
</organism>
<feature type="chain" id="PRO_1000101376" description="Glycine--tRNA ligase beta subunit">
    <location>
        <begin position="1"/>
        <end position="689"/>
    </location>
</feature>
<dbReference type="EC" id="6.1.1.14" evidence="1"/>
<dbReference type="EMBL" id="CP000950">
    <property type="protein sequence ID" value="ACA66337.1"/>
    <property type="molecule type" value="Genomic_DNA"/>
</dbReference>
<dbReference type="RefSeq" id="WP_002209623.1">
    <property type="nucleotide sequence ID" value="NZ_CP009792.1"/>
</dbReference>
<dbReference type="SMR" id="B1JH07"/>
<dbReference type="GeneID" id="57974645"/>
<dbReference type="KEGG" id="ypy:YPK_0023"/>
<dbReference type="PATRIC" id="fig|502800.11.peg.625"/>
<dbReference type="GO" id="GO:0005829">
    <property type="term" value="C:cytosol"/>
    <property type="evidence" value="ECO:0007669"/>
    <property type="project" value="TreeGrafter"/>
</dbReference>
<dbReference type="GO" id="GO:0004814">
    <property type="term" value="F:arginine-tRNA ligase activity"/>
    <property type="evidence" value="ECO:0007669"/>
    <property type="project" value="InterPro"/>
</dbReference>
<dbReference type="GO" id="GO:0005524">
    <property type="term" value="F:ATP binding"/>
    <property type="evidence" value="ECO:0007669"/>
    <property type="project" value="UniProtKB-UniRule"/>
</dbReference>
<dbReference type="GO" id="GO:0004820">
    <property type="term" value="F:glycine-tRNA ligase activity"/>
    <property type="evidence" value="ECO:0007669"/>
    <property type="project" value="UniProtKB-UniRule"/>
</dbReference>
<dbReference type="GO" id="GO:0006420">
    <property type="term" value="P:arginyl-tRNA aminoacylation"/>
    <property type="evidence" value="ECO:0007669"/>
    <property type="project" value="InterPro"/>
</dbReference>
<dbReference type="GO" id="GO:0006426">
    <property type="term" value="P:glycyl-tRNA aminoacylation"/>
    <property type="evidence" value="ECO:0007669"/>
    <property type="project" value="UniProtKB-UniRule"/>
</dbReference>
<dbReference type="HAMAP" id="MF_00255">
    <property type="entry name" value="Gly_tRNA_synth_beta"/>
    <property type="match status" value="1"/>
</dbReference>
<dbReference type="InterPro" id="IPR008909">
    <property type="entry name" value="DALR_anticod-bd"/>
</dbReference>
<dbReference type="InterPro" id="IPR015944">
    <property type="entry name" value="Gly-tRNA-synth_bsu"/>
</dbReference>
<dbReference type="InterPro" id="IPR006194">
    <property type="entry name" value="Gly-tRNA-synth_heterodimer"/>
</dbReference>
<dbReference type="NCBIfam" id="TIGR00211">
    <property type="entry name" value="glyS"/>
    <property type="match status" value="1"/>
</dbReference>
<dbReference type="PANTHER" id="PTHR30075:SF2">
    <property type="entry name" value="GLYCINE--TRNA LIGASE, CHLOROPLASTIC_MITOCHONDRIAL 2"/>
    <property type="match status" value="1"/>
</dbReference>
<dbReference type="PANTHER" id="PTHR30075">
    <property type="entry name" value="GLYCYL-TRNA SYNTHETASE"/>
    <property type="match status" value="1"/>
</dbReference>
<dbReference type="Pfam" id="PF05746">
    <property type="entry name" value="DALR_1"/>
    <property type="match status" value="1"/>
</dbReference>
<dbReference type="Pfam" id="PF02092">
    <property type="entry name" value="tRNA_synt_2f"/>
    <property type="match status" value="1"/>
</dbReference>
<dbReference type="PRINTS" id="PR01045">
    <property type="entry name" value="TRNASYNTHGB"/>
</dbReference>
<dbReference type="SUPFAM" id="SSF109604">
    <property type="entry name" value="HD-domain/PDEase-like"/>
    <property type="match status" value="1"/>
</dbReference>
<dbReference type="PROSITE" id="PS50861">
    <property type="entry name" value="AA_TRNA_LIGASE_II_GLYAB"/>
    <property type="match status" value="1"/>
</dbReference>
<accession>B1JH07</accession>